<reference key="1">
    <citation type="submission" date="2007-10" db="EMBL/GenBank/DDBJ databases">
        <title>Complete sequence of chromosome 1 of Burkholderia multivorans ATCC 17616.</title>
        <authorList>
            <person name="Copeland A."/>
            <person name="Lucas S."/>
            <person name="Lapidus A."/>
            <person name="Barry K."/>
            <person name="Glavina del Rio T."/>
            <person name="Dalin E."/>
            <person name="Tice H."/>
            <person name="Pitluck S."/>
            <person name="Chain P."/>
            <person name="Malfatti S."/>
            <person name="Shin M."/>
            <person name="Vergez L."/>
            <person name="Schmutz J."/>
            <person name="Larimer F."/>
            <person name="Land M."/>
            <person name="Hauser L."/>
            <person name="Kyrpides N."/>
            <person name="Kim E."/>
            <person name="Tiedje J."/>
            <person name="Richardson P."/>
        </authorList>
    </citation>
    <scope>NUCLEOTIDE SEQUENCE [LARGE SCALE GENOMIC DNA]</scope>
    <source>
        <strain>ATCC 17616 / 249</strain>
    </source>
</reference>
<reference key="2">
    <citation type="submission" date="2007-04" db="EMBL/GenBank/DDBJ databases">
        <title>Complete genome sequence of Burkholderia multivorans ATCC 17616.</title>
        <authorList>
            <person name="Ohtsubo Y."/>
            <person name="Yamashita A."/>
            <person name="Kurokawa K."/>
            <person name="Takami H."/>
            <person name="Yuhara S."/>
            <person name="Nishiyama E."/>
            <person name="Endo R."/>
            <person name="Miyazaki R."/>
            <person name="Ono A."/>
            <person name="Yano K."/>
            <person name="Ito M."/>
            <person name="Sota M."/>
            <person name="Yuji N."/>
            <person name="Hattori M."/>
            <person name="Tsuda M."/>
        </authorList>
    </citation>
    <scope>NUCLEOTIDE SEQUENCE [LARGE SCALE GENOMIC DNA]</scope>
    <source>
        <strain>ATCC 17616 / 249</strain>
    </source>
</reference>
<organism>
    <name type="scientific">Burkholderia multivorans (strain ATCC 17616 / 249)</name>
    <dbReference type="NCBI Taxonomy" id="395019"/>
    <lineage>
        <taxon>Bacteria</taxon>
        <taxon>Pseudomonadati</taxon>
        <taxon>Pseudomonadota</taxon>
        <taxon>Betaproteobacteria</taxon>
        <taxon>Burkholderiales</taxon>
        <taxon>Burkholderiaceae</taxon>
        <taxon>Burkholderia</taxon>
        <taxon>Burkholderia cepacia complex</taxon>
    </lineage>
</organism>
<name>RS4_BURM1</name>
<gene>
    <name evidence="1" type="primary">rpsD</name>
    <name type="ordered locus">Bmul_0274</name>
    <name type="ordered locus">BMULJ_02980</name>
</gene>
<feature type="chain" id="PRO_1000140699" description="Small ribosomal subunit protein uS4">
    <location>
        <begin position="1"/>
        <end position="207"/>
    </location>
</feature>
<feature type="domain" description="S4 RNA-binding" evidence="1">
    <location>
        <begin position="97"/>
        <end position="160"/>
    </location>
</feature>
<feature type="region of interest" description="Disordered" evidence="2">
    <location>
        <begin position="31"/>
        <end position="55"/>
    </location>
</feature>
<feature type="compositionally biased region" description="Polar residues" evidence="2">
    <location>
        <begin position="42"/>
        <end position="53"/>
    </location>
</feature>
<keyword id="KW-1185">Reference proteome</keyword>
<keyword id="KW-0687">Ribonucleoprotein</keyword>
<keyword id="KW-0689">Ribosomal protein</keyword>
<keyword id="KW-0694">RNA-binding</keyword>
<keyword id="KW-0699">rRNA-binding</keyword>
<accession>A9ADL8</accession>
<proteinExistence type="inferred from homology"/>
<protein>
    <recommendedName>
        <fullName evidence="1">Small ribosomal subunit protein uS4</fullName>
    </recommendedName>
    <alternativeName>
        <fullName evidence="3">30S ribosomal protein S4</fullName>
    </alternativeName>
</protein>
<comment type="function">
    <text evidence="1">One of the primary rRNA binding proteins, it binds directly to 16S rRNA where it nucleates assembly of the body of the 30S subunit.</text>
</comment>
<comment type="function">
    <text evidence="1">With S5 and S12 plays an important role in translational accuracy.</text>
</comment>
<comment type="subunit">
    <text evidence="1">Part of the 30S ribosomal subunit. Contacts protein S5. The interaction surface between S4 and S5 is involved in control of translational fidelity.</text>
</comment>
<comment type="similarity">
    <text evidence="1">Belongs to the universal ribosomal protein uS4 family.</text>
</comment>
<sequence>MARYIGPKAKLSRREGTDLFLKSARRSLADKCKLDSKPGQHGRTSGARTSDYGTQLREKQKVKRIYGVLERQFRRYFAEADRRKGNTGENLLQLLESRLDNVVYRMGFGSTRAEARQLVSHKSITVNGIVANVPSQQVKAGDVIAIREKAKKQARIIEALSLAEQGGMPSWVAVDAKKFEGTFKQVPERADIGGDINESLIVELYSR</sequence>
<evidence type="ECO:0000255" key="1">
    <source>
        <dbReference type="HAMAP-Rule" id="MF_01306"/>
    </source>
</evidence>
<evidence type="ECO:0000256" key="2">
    <source>
        <dbReference type="SAM" id="MobiDB-lite"/>
    </source>
</evidence>
<evidence type="ECO:0000305" key="3"/>
<dbReference type="EMBL" id="CP000868">
    <property type="protein sequence ID" value="ABX13969.1"/>
    <property type="molecule type" value="Genomic_DNA"/>
</dbReference>
<dbReference type="EMBL" id="AP009385">
    <property type="protein sequence ID" value="BAG44865.1"/>
    <property type="molecule type" value="Genomic_DNA"/>
</dbReference>
<dbReference type="RefSeq" id="WP_006400640.1">
    <property type="nucleotide sequence ID" value="NC_010804.1"/>
</dbReference>
<dbReference type="SMR" id="A9ADL8"/>
<dbReference type="STRING" id="395019.BMULJ_02980"/>
<dbReference type="GeneID" id="89568666"/>
<dbReference type="KEGG" id="bmj:BMULJ_02980"/>
<dbReference type="KEGG" id="bmu:Bmul_0274"/>
<dbReference type="eggNOG" id="COG0522">
    <property type="taxonomic scope" value="Bacteria"/>
</dbReference>
<dbReference type="HOGENOM" id="CLU_092403_0_2_4"/>
<dbReference type="Proteomes" id="UP000008815">
    <property type="component" value="Chromosome 1"/>
</dbReference>
<dbReference type="GO" id="GO:0015935">
    <property type="term" value="C:small ribosomal subunit"/>
    <property type="evidence" value="ECO:0007669"/>
    <property type="project" value="InterPro"/>
</dbReference>
<dbReference type="GO" id="GO:0019843">
    <property type="term" value="F:rRNA binding"/>
    <property type="evidence" value="ECO:0007669"/>
    <property type="project" value="UniProtKB-UniRule"/>
</dbReference>
<dbReference type="GO" id="GO:0003735">
    <property type="term" value="F:structural constituent of ribosome"/>
    <property type="evidence" value="ECO:0007669"/>
    <property type="project" value="InterPro"/>
</dbReference>
<dbReference type="GO" id="GO:0042274">
    <property type="term" value="P:ribosomal small subunit biogenesis"/>
    <property type="evidence" value="ECO:0007669"/>
    <property type="project" value="TreeGrafter"/>
</dbReference>
<dbReference type="GO" id="GO:0006412">
    <property type="term" value="P:translation"/>
    <property type="evidence" value="ECO:0007669"/>
    <property type="project" value="UniProtKB-UniRule"/>
</dbReference>
<dbReference type="CDD" id="cd00165">
    <property type="entry name" value="S4"/>
    <property type="match status" value="1"/>
</dbReference>
<dbReference type="FunFam" id="1.10.1050.10:FF:000001">
    <property type="entry name" value="30S ribosomal protein S4"/>
    <property type="match status" value="1"/>
</dbReference>
<dbReference type="FunFam" id="3.10.290.10:FF:000001">
    <property type="entry name" value="30S ribosomal protein S4"/>
    <property type="match status" value="1"/>
</dbReference>
<dbReference type="Gene3D" id="1.10.1050.10">
    <property type="entry name" value="Ribosomal Protein S4 Delta 41, Chain A, domain 1"/>
    <property type="match status" value="1"/>
</dbReference>
<dbReference type="Gene3D" id="3.10.290.10">
    <property type="entry name" value="RNA-binding S4 domain"/>
    <property type="match status" value="1"/>
</dbReference>
<dbReference type="HAMAP" id="MF_01306_B">
    <property type="entry name" value="Ribosomal_uS4_B"/>
    <property type="match status" value="1"/>
</dbReference>
<dbReference type="InterPro" id="IPR022801">
    <property type="entry name" value="Ribosomal_uS4"/>
</dbReference>
<dbReference type="InterPro" id="IPR005709">
    <property type="entry name" value="Ribosomal_uS4_bac-type"/>
</dbReference>
<dbReference type="InterPro" id="IPR018079">
    <property type="entry name" value="Ribosomal_uS4_CS"/>
</dbReference>
<dbReference type="InterPro" id="IPR001912">
    <property type="entry name" value="Ribosomal_uS4_N"/>
</dbReference>
<dbReference type="InterPro" id="IPR002942">
    <property type="entry name" value="S4_RNA-bd"/>
</dbReference>
<dbReference type="InterPro" id="IPR036986">
    <property type="entry name" value="S4_RNA-bd_sf"/>
</dbReference>
<dbReference type="NCBIfam" id="NF003717">
    <property type="entry name" value="PRK05327.1"/>
    <property type="match status" value="1"/>
</dbReference>
<dbReference type="NCBIfam" id="TIGR01017">
    <property type="entry name" value="rpsD_bact"/>
    <property type="match status" value="1"/>
</dbReference>
<dbReference type="PANTHER" id="PTHR11831">
    <property type="entry name" value="30S 40S RIBOSOMAL PROTEIN"/>
    <property type="match status" value="1"/>
</dbReference>
<dbReference type="PANTHER" id="PTHR11831:SF4">
    <property type="entry name" value="SMALL RIBOSOMAL SUBUNIT PROTEIN US4M"/>
    <property type="match status" value="1"/>
</dbReference>
<dbReference type="Pfam" id="PF00163">
    <property type="entry name" value="Ribosomal_S4"/>
    <property type="match status" value="1"/>
</dbReference>
<dbReference type="Pfam" id="PF01479">
    <property type="entry name" value="S4"/>
    <property type="match status" value="1"/>
</dbReference>
<dbReference type="SMART" id="SM01390">
    <property type="entry name" value="Ribosomal_S4"/>
    <property type="match status" value="1"/>
</dbReference>
<dbReference type="SMART" id="SM00363">
    <property type="entry name" value="S4"/>
    <property type="match status" value="1"/>
</dbReference>
<dbReference type="SUPFAM" id="SSF55174">
    <property type="entry name" value="Alpha-L RNA-binding motif"/>
    <property type="match status" value="1"/>
</dbReference>
<dbReference type="PROSITE" id="PS00632">
    <property type="entry name" value="RIBOSOMAL_S4"/>
    <property type="match status" value="1"/>
</dbReference>
<dbReference type="PROSITE" id="PS50889">
    <property type="entry name" value="S4"/>
    <property type="match status" value="1"/>
</dbReference>